<name>RL16_RUMCH</name>
<dbReference type="EMBL" id="CP001348">
    <property type="protein sequence ID" value="ACL75143.1"/>
    <property type="molecule type" value="Genomic_DNA"/>
</dbReference>
<dbReference type="RefSeq" id="WP_015924308.1">
    <property type="nucleotide sequence ID" value="NC_011898.1"/>
</dbReference>
<dbReference type="SMR" id="B8I7Y6"/>
<dbReference type="STRING" id="394503.Ccel_0765"/>
<dbReference type="KEGG" id="cce:Ccel_0765"/>
<dbReference type="eggNOG" id="COG0197">
    <property type="taxonomic scope" value="Bacteria"/>
</dbReference>
<dbReference type="HOGENOM" id="CLU_078858_2_1_9"/>
<dbReference type="OrthoDB" id="9802589at2"/>
<dbReference type="Proteomes" id="UP000001349">
    <property type="component" value="Chromosome"/>
</dbReference>
<dbReference type="GO" id="GO:0022625">
    <property type="term" value="C:cytosolic large ribosomal subunit"/>
    <property type="evidence" value="ECO:0007669"/>
    <property type="project" value="TreeGrafter"/>
</dbReference>
<dbReference type="GO" id="GO:0019843">
    <property type="term" value="F:rRNA binding"/>
    <property type="evidence" value="ECO:0007669"/>
    <property type="project" value="UniProtKB-UniRule"/>
</dbReference>
<dbReference type="GO" id="GO:0003735">
    <property type="term" value="F:structural constituent of ribosome"/>
    <property type="evidence" value="ECO:0007669"/>
    <property type="project" value="InterPro"/>
</dbReference>
<dbReference type="GO" id="GO:0000049">
    <property type="term" value="F:tRNA binding"/>
    <property type="evidence" value="ECO:0007669"/>
    <property type="project" value="UniProtKB-KW"/>
</dbReference>
<dbReference type="GO" id="GO:0006412">
    <property type="term" value="P:translation"/>
    <property type="evidence" value="ECO:0007669"/>
    <property type="project" value="UniProtKB-UniRule"/>
</dbReference>
<dbReference type="CDD" id="cd01433">
    <property type="entry name" value="Ribosomal_L16_L10e"/>
    <property type="match status" value="1"/>
</dbReference>
<dbReference type="FunFam" id="3.90.1170.10:FF:000001">
    <property type="entry name" value="50S ribosomal protein L16"/>
    <property type="match status" value="1"/>
</dbReference>
<dbReference type="Gene3D" id="3.90.1170.10">
    <property type="entry name" value="Ribosomal protein L10e/L16"/>
    <property type="match status" value="1"/>
</dbReference>
<dbReference type="HAMAP" id="MF_01342">
    <property type="entry name" value="Ribosomal_uL16"/>
    <property type="match status" value="1"/>
</dbReference>
<dbReference type="InterPro" id="IPR047873">
    <property type="entry name" value="Ribosomal_uL16"/>
</dbReference>
<dbReference type="InterPro" id="IPR000114">
    <property type="entry name" value="Ribosomal_uL16_bact-type"/>
</dbReference>
<dbReference type="InterPro" id="IPR020798">
    <property type="entry name" value="Ribosomal_uL16_CS"/>
</dbReference>
<dbReference type="InterPro" id="IPR016180">
    <property type="entry name" value="Ribosomal_uL16_dom"/>
</dbReference>
<dbReference type="InterPro" id="IPR036920">
    <property type="entry name" value="Ribosomal_uL16_sf"/>
</dbReference>
<dbReference type="NCBIfam" id="TIGR01164">
    <property type="entry name" value="rplP_bact"/>
    <property type="match status" value="1"/>
</dbReference>
<dbReference type="PANTHER" id="PTHR12220">
    <property type="entry name" value="50S/60S RIBOSOMAL PROTEIN L16"/>
    <property type="match status" value="1"/>
</dbReference>
<dbReference type="PANTHER" id="PTHR12220:SF13">
    <property type="entry name" value="LARGE RIBOSOMAL SUBUNIT PROTEIN UL16M"/>
    <property type="match status" value="1"/>
</dbReference>
<dbReference type="Pfam" id="PF00252">
    <property type="entry name" value="Ribosomal_L16"/>
    <property type="match status" value="1"/>
</dbReference>
<dbReference type="PRINTS" id="PR00060">
    <property type="entry name" value="RIBOSOMALL16"/>
</dbReference>
<dbReference type="SUPFAM" id="SSF54686">
    <property type="entry name" value="Ribosomal protein L16p/L10e"/>
    <property type="match status" value="1"/>
</dbReference>
<dbReference type="PROSITE" id="PS00586">
    <property type="entry name" value="RIBOSOMAL_L16_1"/>
    <property type="match status" value="1"/>
</dbReference>
<dbReference type="PROSITE" id="PS00701">
    <property type="entry name" value="RIBOSOMAL_L16_2"/>
    <property type="match status" value="1"/>
</dbReference>
<keyword id="KW-1185">Reference proteome</keyword>
<keyword id="KW-0687">Ribonucleoprotein</keyword>
<keyword id="KW-0689">Ribosomal protein</keyword>
<keyword id="KW-0694">RNA-binding</keyword>
<keyword id="KW-0699">rRNA-binding</keyword>
<keyword id="KW-0820">tRNA-binding</keyword>
<reference key="1">
    <citation type="submission" date="2009-01" db="EMBL/GenBank/DDBJ databases">
        <title>Complete sequence of Clostridium cellulolyticum H10.</title>
        <authorList>
            <consortium name="US DOE Joint Genome Institute"/>
            <person name="Lucas S."/>
            <person name="Copeland A."/>
            <person name="Lapidus A."/>
            <person name="Glavina del Rio T."/>
            <person name="Dalin E."/>
            <person name="Tice H."/>
            <person name="Bruce D."/>
            <person name="Goodwin L."/>
            <person name="Pitluck S."/>
            <person name="Chertkov O."/>
            <person name="Saunders E."/>
            <person name="Brettin T."/>
            <person name="Detter J.C."/>
            <person name="Han C."/>
            <person name="Larimer F."/>
            <person name="Land M."/>
            <person name="Hauser L."/>
            <person name="Kyrpides N."/>
            <person name="Ivanova N."/>
            <person name="Zhou J."/>
            <person name="Richardson P."/>
        </authorList>
    </citation>
    <scope>NUCLEOTIDE SEQUENCE [LARGE SCALE GENOMIC DNA]</scope>
    <source>
        <strain>ATCC 35319 / DSM 5812 / JCM 6584 / H10</strain>
    </source>
</reference>
<gene>
    <name evidence="1" type="primary">rplP</name>
    <name type="ordered locus">Ccel_0765</name>
</gene>
<evidence type="ECO:0000255" key="1">
    <source>
        <dbReference type="HAMAP-Rule" id="MF_01342"/>
    </source>
</evidence>
<evidence type="ECO:0000256" key="2">
    <source>
        <dbReference type="SAM" id="MobiDB-lite"/>
    </source>
</evidence>
<evidence type="ECO:0000305" key="3"/>
<sequence length="145" mass="16277">MLMPKRVKHRRVHRGRMTGKATRGNFVSNGEFGIQAMEPAWITSNQIEAARIAMTRFIKRGGKVWIKIFPDKPVTKKPAETRMGSGKGSPEYWVAVVKPGRVLFEIAGVPEETAREALRLAMHKLPVKCKFVTRETEMGGEANES</sequence>
<protein>
    <recommendedName>
        <fullName evidence="1">Large ribosomal subunit protein uL16</fullName>
    </recommendedName>
    <alternativeName>
        <fullName evidence="3">50S ribosomal protein L16</fullName>
    </alternativeName>
</protein>
<organism>
    <name type="scientific">Ruminiclostridium cellulolyticum (strain ATCC 35319 / DSM 5812 / JCM 6584 / H10)</name>
    <name type="common">Clostridium cellulolyticum</name>
    <dbReference type="NCBI Taxonomy" id="394503"/>
    <lineage>
        <taxon>Bacteria</taxon>
        <taxon>Bacillati</taxon>
        <taxon>Bacillota</taxon>
        <taxon>Clostridia</taxon>
        <taxon>Eubacteriales</taxon>
        <taxon>Oscillospiraceae</taxon>
        <taxon>Ruminiclostridium</taxon>
    </lineage>
</organism>
<accession>B8I7Y6</accession>
<feature type="chain" id="PRO_1000166349" description="Large ribosomal subunit protein uL16">
    <location>
        <begin position="1"/>
        <end position="145"/>
    </location>
</feature>
<feature type="region of interest" description="Disordered" evidence="2">
    <location>
        <begin position="1"/>
        <end position="22"/>
    </location>
</feature>
<feature type="compositionally biased region" description="Basic residues" evidence="2">
    <location>
        <begin position="1"/>
        <end position="17"/>
    </location>
</feature>
<proteinExistence type="inferred from homology"/>
<comment type="function">
    <text evidence="1">Binds 23S rRNA and is also seen to make contacts with the A and possibly P site tRNAs.</text>
</comment>
<comment type="subunit">
    <text evidence="1">Part of the 50S ribosomal subunit.</text>
</comment>
<comment type="similarity">
    <text evidence="1">Belongs to the universal ribosomal protein uL16 family.</text>
</comment>